<name>PFKA_ACTSZ</name>
<comment type="function">
    <text evidence="1">Catalyzes the phosphorylation of D-fructose 6-phosphate to fructose 1,6-bisphosphate by ATP, the first committing step of glycolysis.</text>
</comment>
<comment type="catalytic activity">
    <reaction evidence="1">
        <text>beta-D-fructose 6-phosphate + ATP = beta-D-fructose 1,6-bisphosphate + ADP + H(+)</text>
        <dbReference type="Rhea" id="RHEA:16109"/>
        <dbReference type="ChEBI" id="CHEBI:15378"/>
        <dbReference type="ChEBI" id="CHEBI:30616"/>
        <dbReference type="ChEBI" id="CHEBI:32966"/>
        <dbReference type="ChEBI" id="CHEBI:57634"/>
        <dbReference type="ChEBI" id="CHEBI:456216"/>
        <dbReference type="EC" id="2.7.1.11"/>
    </reaction>
</comment>
<comment type="cofactor">
    <cofactor evidence="1">
        <name>Mg(2+)</name>
        <dbReference type="ChEBI" id="CHEBI:18420"/>
    </cofactor>
</comment>
<comment type="activity regulation">
    <text evidence="1">Allosterically activated by ADP and other diphosphonucleosides, and allosterically inhibited by phosphoenolpyruvate.</text>
</comment>
<comment type="pathway">
    <text evidence="1">Carbohydrate degradation; glycolysis; D-glyceraldehyde 3-phosphate and glycerone phosphate from D-glucose: step 3/4.</text>
</comment>
<comment type="subunit">
    <text evidence="1">Homotetramer.</text>
</comment>
<comment type="subcellular location">
    <subcellularLocation>
        <location evidence="1">Cytoplasm</location>
    </subcellularLocation>
</comment>
<comment type="similarity">
    <text evidence="1">Belongs to the phosphofructokinase type A (PFKA) family. ATP-dependent PFK group I subfamily. Prokaryotic clade 'B1' sub-subfamily.</text>
</comment>
<sequence>MIKKIAVLTSGGDAPGMNAAIRAVVRAGLSEGLEVYGVFDGYQGLFENRIQKLSRYSVSDVINRGGTFLGSARFPEFKQPEVRSKCAEILHSHGIDALVVIGGDGSYTGAKLLTEEHGFPCIGLPGTIDNDIPGTDYTIGYQTALETAVDAIDRLRDTSGSHHRISIVEIMGRHCSDLTICAAIAGGCEYIVAPEVGFNQEELIQQIELSLANGKRHAIIAITELVTDVHKLAKDIEARVGNETRATVLGHVQRGGSPCAFDRILASRMGVYAVELLLQGHKGRCVGIQQEKLVHHDIIEAIDSMRRPFKSDYLEVSKKLF</sequence>
<evidence type="ECO:0000255" key="1">
    <source>
        <dbReference type="HAMAP-Rule" id="MF_00339"/>
    </source>
</evidence>
<protein>
    <recommendedName>
        <fullName evidence="1">ATP-dependent 6-phosphofructokinase</fullName>
        <shortName evidence="1">ATP-PFK</shortName>
        <shortName evidence="1">Phosphofructokinase</shortName>
        <ecNumber evidence="1">2.7.1.11</ecNumber>
    </recommendedName>
    <alternativeName>
        <fullName evidence="1">Phosphohexokinase</fullName>
    </alternativeName>
</protein>
<dbReference type="EC" id="2.7.1.11" evidence="1"/>
<dbReference type="EMBL" id="CP000746">
    <property type="protein sequence ID" value="ABR74060.1"/>
    <property type="molecule type" value="Genomic_DNA"/>
</dbReference>
<dbReference type="RefSeq" id="WP_012072440.1">
    <property type="nucleotide sequence ID" value="NC_009655.1"/>
</dbReference>
<dbReference type="SMR" id="A6VM63"/>
<dbReference type="STRING" id="339671.Asuc_0687"/>
<dbReference type="KEGG" id="asu:Asuc_0687"/>
<dbReference type="eggNOG" id="COG0205">
    <property type="taxonomic scope" value="Bacteria"/>
</dbReference>
<dbReference type="HOGENOM" id="CLU_020655_0_1_6"/>
<dbReference type="OrthoDB" id="9802503at2"/>
<dbReference type="UniPathway" id="UPA00109">
    <property type="reaction ID" value="UER00182"/>
</dbReference>
<dbReference type="Proteomes" id="UP000001114">
    <property type="component" value="Chromosome"/>
</dbReference>
<dbReference type="GO" id="GO:0005945">
    <property type="term" value="C:6-phosphofructokinase complex"/>
    <property type="evidence" value="ECO:0007669"/>
    <property type="project" value="TreeGrafter"/>
</dbReference>
<dbReference type="GO" id="GO:0003872">
    <property type="term" value="F:6-phosphofructokinase activity"/>
    <property type="evidence" value="ECO:0007669"/>
    <property type="project" value="UniProtKB-UniRule"/>
</dbReference>
<dbReference type="GO" id="GO:0016208">
    <property type="term" value="F:AMP binding"/>
    <property type="evidence" value="ECO:0007669"/>
    <property type="project" value="TreeGrafter"/>
</dbReference>
<dbReference type="GO" id="GO:0005524">
    <property type="term" value="F:ATP binding"/>
    <property type="evidence" value="ECO:0007669"/>
    <property type="project" value="UniProtKB-KW"/>
</dbReference>
<dbReference type="GO" id="GO:0070095">
    <property type="term" value="F:fructose-6-phosphate binding"/>
    <property type="evidence" value="ECO:0007669"/>
    <property type="project" value="TreeGrafter"/>
</dbReference>
<dbReference type="GO" id="GO:0042802">
    <property type="term" value="F:identical protein binding"/>
    <property type="evidence" value="ECO:0007669"/>
    <property type="project" value="TreeGrafter"/>
</dbReference>
<dbReference type="GO" id="GO:0046872">
    <property type="term" value="F:metal ion binding"/>
    <property type="evidence" value="ECO:0007669"/>
    <property type="project" value="UniProtKB-KW"/>
</dbReference>
<dbReference type="GO" id="GO:0048029">
    <property type="term" value="F:monosaccharide binding"/>
    <property type="evidence" value="ECO:0007669"/>
    <property type="project" value="TreeGrafter"/>
</dbReference>
<dbReference type="GO" id="GO:0061621">
    <property type="term" value="P:canonical glycolysis"/>
    <property type="evidence" value="ECO:0007669"/>
    <property type="project" value="TreeGrafter"/>
</dbReference>
<dbReference type="GO" id="GO:0030388">
    <property type="term" value="P:fructose 1,6-bisphosphate metabolic process"/>
    <property type="evidence" value="ECO:0007669"/>
    <property type="project" value="TreeGrafter"/>
</dbReference>
<dbReference type="GO" id="GO:0006002">
    <property type="term" value="P:fructose 6-phosphate metabolic process"/>
    <property type="evidence" value="ECO:0007669"/>
    <property type="project" value="InterPro"/>
</dbReference>
<dbReference type="CDD" id="cd00763">
    <property type="entry name" value="Bacterial_PFK"/>
    <property type="match status" value="1"/>
</dbReference>
<dbReference type="FunFam" id="3.40.50.450:FF:000001">
    <property type="entry name" value="ATP-dependent 6-phosphofructokinase"/>
    <property type="match status" value="1"/>
</dbReference>
<dbReference type="FunFam" id="3.40.50.460:FF:000002">
    <property type="entry name" value="ATP-dependent 6-phosphofructokinase"/>
    <property type="match status" value="1"/>
</dbReference>
<dbReference type="Gene3D" id="3.40.50.450">
    <property type="match status" value="1"/>
</dbReference>
<dbReference type="Gene3D" id="3.40.50.460">
    <property type="entry name" value="Phosphofructokinase domain"/>
    <property type="match status" value="1"/>
</dbReference>
<dbReference type="HAMAP" id="MF_00339">
    <property type="entry name" value="Phosphofructokinase_I_B1"/>
    <property type="match status" value="1"/>
</dbReference>
<dbReference type="InterPro" id="IPR022953">
    <property type="entry name" value="ATP_PFK"/>
</dbReference>
<dbReference type="InterPro" id="IPR012003">
    <property type="entry name" value="ATP_PFK_prok-type"/>
</dbReference>
<dbReference type="InterPro" id="IPR012828">
    <property type="entry name" value="PFKA_ATP_prok"/>
</dbReference>
<dbReference type="InterPro" id="IPR015912">
    <property type="entry name" value="Phosphofructokinase_CS"/>
</dbReference>
<dbReference type="InterPro" id="IPR000023">
    <property type="entry name" value="Phosphofructokinase_dom"/>
</dbReference>
<dbReference type="InterPro" id="IPR035966">
    <property type="entry name" value="PKF_sf"/>
</dbReference>
<dbReference type="NCBIfam" id="TIGR02482">
    <property type="entry name" value="PFKA_ATP"/>
    <property type="match status" value="1"/>
</dbReference>
<dbReference type="NCBIfam" id="NF002872">
    <property type="entry name" value="PRK03202.1"/>
    <property type="match status" value="1"/>
</dbReference>
<dbReference type="PANTHER" id="PTHR13697:SF4">
    <property type="entry name" value="ATP-DEPENDENT 6-PHOSPHOFRUCTOKINASE"/>
    <property type="match status" value="1"/>
</dbReference>
<dbReference type="PANTHER" id="PTHR13697">
    <property type="entry name" value="PHOSPHOFRUCTOKINASE"/>
    <property type="match status" value="1"/>
</dbReference>
<dbReference type="Pfam" id="PF00365">
    <property type="entry name" value="PFK"/>
    <property type="match status" value="1"/>
</dbReference>
<dbReference type="PIRSF" id="PIRSF000532">
    <property type="entry name" value="ATP_PFK_prok"/>
    <property type="match status" value="1"/>
</dbReference>
<dbReference type="PRINTS" id="PR00476">
    <property type="entry name" value="PHFRCTKINASE"/>
</dbReference>
<dbReference type="SUPFAM" id="SSF53784">
    <property type="entry name" value="Phosphofructokinase"/>
    <property type="match status" value="1"/>
</dbReference>
<dbReference type="PROSITE" id="PS00433">
    <property type="entry name" value="PHOSPHOFRUCTOKINASE"/>
    <property type="match status" value="1"/>
</dbReference>
<proteinExistence type="inferred from homology"/>
<feature type="chain" id="PRO_1000072054" description="ATP-dependent 6-phosphofructokinase">
    <location>
        <begin position="1"/>
        <end position="321"/>
    </location>
</feature>
<feature type="active site" description="Proton acceptor" evidence="1">
    <location>
        <position position="129"/>
    </location>
</feature>
<feature type="binding site" evidence="1">
    <location>
        <position position="12"/>
    </location>
    <ligand>
        <name>ATP</name>
        <dbReference type="ChEBI" id="CHEBI:30616"/>
    </ligand>
</feature>
<feature type="binding site" evidence="1">
    <location>
        <begin position="22"/>
        <end position="26"/>
    </location>
    <ligand>
        <name>ADP</name>
        <dbReference type="ChEBI" id="CHEBI:456216"/>
        <note>allosteric activator; ligand shared between dimeric partners</note>
    </ligand>
</feature>
<feature type="binding site" evidence="1">
    <location>
        <begin position="55"/>
        <end position="60"/>
    </location>
    <ligand>
        <name>ADP</name>
        <dbReference type="ChEBI" id="CHEBI:456216"/>
        <note>allosteric activator; ligand shared between dimeric partners</note>
    </ligand>
</feature>
<feature type="binding site" evidence="1">
    <location>
        <begin position="73"/>
        <end position="74"/>
    </location>
    <ligand>
        <name>ATP</name>
        <dbReference type="ChEBI" id="CHEBI:30616"/>
    </ligand>
</feature>
<feature type="binding site" evidence="1">
    <location>
        <begin position="103"/>
        <end position="106"/>
    </location>
    <ligand>
        <name>ATP</name>
        <dbReference type="ChEBI" id="CHEBI:30616"/>
    </ligand>
</feature>
<feature type="binding site" evidence="1">
    <location>
        <position position="104"/>
    </location>
    <ligand>
        <name>Mg(2+)</name>
        <dbReference type="ChEBI" id="CHEBI:18420"/>
        <note>catalytic</note>
    </ligand>
</feature>
<feature type="binding site" description="in other chain" evidence="1">
    <location>
        <begin position="127"/>
        <end position="129"/>
    </location>
    <ligand>
        <name>substrate</name>
        <note>ligand shared between dimeric partners</note>
    </ligand>
</feature>
<feature type="binding site" description="in other chain" evidence="1">
    <location>
        <position position="156"/>
    </location>
    <ligand>
        <name>ADP</name>
        <dbReference type="ChEBI" id="CHEBI:456216"/>
        <note>allosteric activator; ligand shared between dimeric partners</note>
    </ligand>
</feature>
<feature type="binding site" evidence="1">
    <location>
        <position position="164"/>
    </location>
    <ligand>
        <name>substrate</name>
        <note>ligand shared between dimeric partners</note>
    </ligand>
</feature>
<feature type="binding site" description="in other chain" evidence="1">
    <location>
        <begin position="171"/>
        <end position="173"/>
    </location>
    <ligand>
        <name>substrate</name>
        <note>ligand shared between dimeric partners</note>
    </ligand>
</feature>
<feature type="binding site" description="in other chain" evidence="1">
    <location>
        <begin position="187"/>
        <end position="189"/>
    </location>
    <ligand>
        <name>ADP</name>
        <dbReference type="ChEBI" id="CHEBI:456216"/>
        <note>allosteric activator; ligand shared between dimeric partners</note>
    </ligand>
</feature>
<feature type="binding site" description="in other chain" evidence="1">
    <location>
        <begin position="215"/>
        <end position="217"/>
    </location>
    <ligand>
        <name>ADP</name>
        <dbReference type="ChEBI" id="CHEBI:456216"/>
        <note>allosteric activator; ligand shared between dimeric partners</note>
    </ligand>
</feature>
<feature type="binding site" description="in other chain" evidence="1">
    <location>
        <position position="224"/>
    </location>
    <ligand>
        <name>substrate</name>
        <note>ligand shared between dimeric partners</note>
    </ligand>
</feature>
<feature type="binding site" evidence="1">
    <location>
        <position position="245"/>
    </location>
    <ligand>
        <name>substrate</name>
        <note>ligand shared between dimeric partners</note>
    </ligand>
</feature>
<feature type="binding site" description="in other chain" evidence="1">
    <location>
        <begin position="251"/>
        <end position="254"/>
    </location>
    <ligand>
        <name>substrate</name>
        <note>ligand shared between dimeric partners</note>
    </ligand>
</feature>
<keyword id="KW-0021">Allosteric enzyme</keyword>
<keyword id="KW-0067">ATP-binding</keyword>
<keyword id="KW-0963">Cytoplasm</keyword>
<keyword id="KW-0324">Glycolysis</keyword>
<keyword id="KW-0418">Kinase</keyword>
<keyword id="KW-0460">Magnesium</keyword>
<keyword id="KW-0479">Metal-binding</keyword>
<keyword id="KW-0547">Nucleotide-binding</keyword>
<keyword id="KW-1185">Reference proteome</keyword>
<keyword id="KW-0808">Transferase</keyword>
<organism>
    <name type="scientific">Actinobacillus succinogenes (strain ATCC 55618 / DSM 22257 / CCUG 43843 / 130Z)</name>
    <dbReference type="NCBI Taxonomy" id="339671"/>
    <lineage>
        <taxon>Bacteria</taxon>
        <taxon>Pseudomonadati</taxon>
        <taxon>Pseudomonadota</taxon>
        <taxon>Gammaproteobacteria</taxon>
        <taxon>Pasteurellales</taxon>
        <taxon>Pasteurellaceae</taxon>
        <taxon>Actinobacillus</taxon>
    </lineage>
</organism>
<gene>
    <name evidence="1" type="primary">pfkA</name>
    <name type="ordered locus">Asuc_0687</name>
</gene>
<accession>A6VM63</accession>
<reference key="1">
    <citation type="journal article" date="2010" name="BMC Genomics">
        <title>A genomic perspective on the potential of Actinobacillus succinogenes for industrial succinate production.</title>
        <authorList>
            <person name="McKinlay J.B."/>
            <person name="Laivenieks M."/>
            <person name="Schindler B.D."/>
            <person name="McKinlay A.A."/>
            <person name="Siddaramappa S."/>
            <person name="Challacombe J.F."/>
            <person name="Lowry S.R."/>
            <person name="Clum A."/>
            <person name="Lapidus A.L."/>
            <person name="Burkhart K.B."/>
            <person name="Harkins V."/>
            <person name="Vieille C."/>
        </authorList>
    </citation>
    <scope>NUCLEOTIDE SEQUENCE [LARGE SCALE GENOMIC DNA]</scope>
    <source>
        <strain>ATCC 55618 / DSM 22257 / CCUG 43843 / 130Z</strain>
    </source>
</reference>